<gene>
    <name evidence="1" type="primary">dnaK</name>
    <name type="ordered locus">Cthe_1322</name>
</gene>
<accession>A3DF25</accession>
<keyword id="KW-0067">ATP-binding</keyword>
<keyword id="KW-0143">Chaperone</keyword>
<keyword id="KW-0547">Nucleotide-binding</keyword>
<keyword id="KW-0597">Phosphoprotein</keyword>
<keyword id="KW-1185">Reference proteome</keyword>
<keyword id="KW-0346">Stress response</keyword>
<comment type="function">
    <text evidence="1">Acts as a chaperone.</text>
</comment>
<comment type="induction">
    <text evidence="1">By stress conditions e.g. heat shock.</text>
</comment>
<comment type="similarity">
    <text evidence="1">Belongs to the heat shock protein 70 family.</text>
</comment>
<organism>
    <name type="scientific">Acetivibrio thermocellus (strain ATCC 27405 / DSM 1237 / JCM 9322 / NBRC 103400 / NCIMB 10682 / NRRL B-4536 / VPI 7372)</name>
    <name type="common">Clostridium thermocellum</name>
    <dbReference type="NCBI Taxonomy" id="203119"/>
    <lineage>
        <taxon>Bacteria</taxon>
        <taxon>Bacillati</taxon>
        <taxon>Bacillota</taxon>
        <taxon>Clostridia</taxon>
        <taxon>Eubacteriales</taxon>
        <taxon>Oscillospiraceae</taxon>
        <taxon>Acetivibrio</taxon>
    </lineage>
</organism>
<dbReference type="EMBL" id="CP000568">
    <property type="protein sequence ID" value="ABN52554.1"/>
    <property type="molecule type" value="Genomic_DNA"/>
</dbReference>
<dbReference type="RefSeq" id="WP_003517018.1">
    <property type="nucleotide sequence ID" value="NC_009012.1"/>
</dbReference>
<dbReference type="SMR" id="A3DF25"/>
<dbReference type="STRING" id="203119.Cthe_1322"/>
<dbReference type="GeneID" id="35805644"/>
<dbReference type="KEGG" id="cth:Cthe_1322"/>
<dbReference type="eggNOG" id="COG0443">
    <property type="taxonomic scope" value="Bacteria"/>
</dbReference>
<dbReference type="HOGENOM" id="CLU_005965_2_1_9"/>
<dbReference type="OrthoDB" id="9766019at2"/>
<dbReference type="Proteomes" id="UP000002145">
    <property type="component" value="Chromosome"/>
</dbReference>
<dbReference type="GO" id="GO:0005524">
    <property type="term" value="F:ATP binding"/>
    <property type="evidence" value="ECO:0007669"/>
    <property type="project" value="UniProtKB-UniRule"/>
</dbReference>
<dbReference type="GO" id="GO:0140662">
    <property type="term" value="F:ATP-dependent protein folding chaperone"/>
    <property type="evidence" value="ECO:0007669"/>
    <property type="project" value="InterPro"/>
</dbReference>
<dbReference type="GO" id="GO:0051082">
    <property type="term" value="F:unfolded protein binding"/>
    <property type="evidence" value="ECO:0007669"/>
    <property type="project" value="InterPro"/>
</dbReference>
<dbReference type="CDD" id="cd10234">
    <property type="entry name" value="ASKHA_NBD_HSP70_DnaK-like"/>
    <property type="match status" value="1"/>
</dbReference>
<dbReference type="FunFam" id="2.60.34.10:FF:000014">
    <property type="entry name" value="Chaperone protein DnaK HSP70"/>
    <property type="match status" value="1"/>
</dbReference>
<dbReference type="FunFam" id="1.20.1270.10:FF:000001">
    <property type="entry name" value="Molecular chaperone DnaK"/>
    <property type="match status" value="1"/>
</dbReference>
<dbReference type="FunFam" id="3.30.420.40:FF:000071">
    <property type="entry name" value="Molecular chaperone DnaK"/>
    <property type="match status" value="1"/>
</dbReference>
<dbReference type="FunFam" id="3.90.640.10:FF:000003">
    <property type="entry name" value="Molecular chaperone DnaK"/>
    <property type="match status" value="1"/>
</dbReference>
<dbReference type="Gene3D" id="1.20.1270.10">
    <property type="match status" value="1"/>
</dbReference>
<dbReference type="Gene3D" id="3.30.30.30">
    <property type="match status" value="1"/>
</dbReference>
<dbReference type="Gene3D" id="3.30.420.40">
    <property type="match status" value="3"/>
</dbReference>
<dbReference type="Gene3D" id="3.90.640.10">
    <property type="entry name" value="Actin, Chain A, domain 4"/>
    <property type="match status" value="1"/>
</dbReference>
<dbReference type="Gene3D" id="2.60.34.10">
    <property type="entry name" value="Substrate Binding Domain Of DNAk, Chain A, domain 1"/>
    <property type="match status" value="1"/>
</dbReference>
<dbReference type="HAMAP" id="MF_00332">
    <property type="entry name" value="DnaK"/>
    <property type="match status" value="1"/>
</dbReference>
<dbReference type="InterPro" id="IPR043129">
    <property type="entry name" value="ATPase_NBD"/>
</dbReference>
<dbReference type="InterPro" id="IPR012725">
    <property type="entry name" value="Chaperone_DnaK"/>
</dbReference>
<dbReference type="InterPro" id="IPR018181">
    <property type="entry name" value="Heat_shock_70_CS"/>
</dbReference>
<dbReference type="InterPro" id="IPR029048">
    <property type="entry name" value="HSP70_C_sf"/>
</dbReference>
<dbReference type="InterPro" id="IPR029047">
    <property type="entry name" value="HSP70_peptide-bd_sf"/>
</dbReference>
<dbReference type="InterPro" id="IPR013126">
    <property type="entry name" value="Hsp_70_fam"/>
</dbReference>
<dbReference type="NCBIfam" id="NF001413">
    <property type="entry name" value="PRK00290.1"/>
    <property type="match status" value="1"/>
</dbReference>
<dbReference type="NCBIfam" id="TIGR02350">
    <property type="entry name" value="prok_dnaK"/>
    <property type="match status" value="1"/>
</dbReference>
<dbReference type="PANTHER" id="PTHR19375">
    <property type="entry name" value="HEAT SHOCK PROTEIN 70KDA"/>
    <property type="match status" value="1"/>
</dbReference>
<dbReference type="Pfam" id="PF00012">
    <property type="entry name" value="HSP70"/>
    <property type="match status" value="2"/>
</dbReference>
<dbReference type="PRINTS" id="PR00301">
    <property type="entry name" value="HEATSHOCK70"/>
</dbReference>
<dbReference type="SUPFAM" id="SSF53067">
    <property type="entry name" value="Actin-like ATPase domain"/>
    <property type="match status" value="2"/>
</dbReference>
<dbReference type="SUPFAM" id="SSF100934">
    <property type="entry name" value="Heat shock protein 70kD (HSP70), C-terminal subdomain"/>
    <property type="match status" value="1"/>
</dbReference>
<dbReference type="SUPFAM" id="SSF100920">
    <property type="entry name" value="Heat shock protein 70kD (HSP70), peptide-binding domain"/>
    <property type="match status" value="1"/>
</dbReference>
<dbReference type="PROSITE" id="PS00297">
    <property type="entry name" value="HSP70_1"/>
    <property type="match status" value="1"/>
</dbReference>
<dbReference type="PROSITE" id="PS00329">
    <property type="entry name" value="HSP70_2"/>
    <property type="match status" value="1"/>
</dbReference>
<dbReference type="PROSITE" id="PS01036">
    <property type="entry name" value="HSP70_3"/>
    <property type="match status" value="1"/>
</dbReference>
<reference key="1">
    <citation type="submission" date="2007-02" db="EMBL/GenBank/DDBJ databases">
        <title>Complete sequence of Clostridium thermocellum ATCC 27405.</title>
        <authorList>
            <consortium name="US DOE Joint Genome Institute"/>
            <person name="Copeland A."/>
            <person name="Lucas S."/>
            <person name="Lapidus A."/>
            <person name="Barry K."/>
            <person name="Detter J.C."/>
            <person name="Glavina del Rio T."/>
            <person name="Hammon N."/>
            <person name="Israni S."/>
            <person name="Dalin E."/>
            <person name="Tice H."/>
            <person name="Pitluck S."/>
            <person name="Chertkov O."/>
            <person name="Brettin T."/>
            <person name="Bruce D."/>
            <person name="Han C."/>
            <person name="Tapia R."/>
            <person name="Gilna P."/>
            <person name="Schmutz J."/>
            <person name="Larimer F."/>
            <person name="Land M."/>
            <person name="Hauser L."/>
            <person name="Kyrpides N."/>
            <person name="Mikhailova N."/>
            <person name="Wu J.H.D."/>
            <person name="Newcomb M."/>
            <person name="Richardson P."/>
        </authorList>
    </citation>
    <scope>NUCLEOTIDE SEQUENCE [LARGE SCALE GENOMIC DNA]</scope>
    <source>
        <strain>ATCC 27405 / DSM 1237 / JCM 9322 / NBRC 103400 / NCIMB 10682 / NRRL B-4536 / VPI 7372</strain>
    </source>
</reference>
<proteinExistence type="inferred from homology"/>
<protein>
    <recommendedName>
        <fullName evidence="1">Chaperone protein DnaK</fullName>
    </recommendedName>
    <alternativeName>
        <fullName evidence="1">HSP70</fullName>
    </alternativeName>
    <alternativeName>
        <fullName evidence="1">Heat shock 70 kDa protein</fullName>
    </alternativeName>
    <alternativeName>
        <fullName evidence="1">Heat shock protein 70</fullName>
    </alternativeName>
</protein>
<name>DNAK_ACET2</name>
<feature type="chain" id="PRO_1000059546" description="Chaperone protein DnaK">
    <location>
        <begin position="1"/>
        <end position="608"/>
    </location>
</feature>
<feature type="region of interest" description="Disordered" evidence="2">
    <location>
        <begin position="493"/>
        <end position="514"/>
    </location>
</feature>
<feature type="region of interest" description="Disordered" evidence="2">
    <location>
        <begin position="577"/>
        <end position="608"/>
    </location>
</feature>
<feature type="compositionally biased region" description="Basic and acidic residues" evidence="2">
    <location>
        <begin position="493"/>
        <end position="505"/>
    </location>
</feature>
<feature type="compositionally biased region" description="Low complexity" evidence="2">
    <location>
        <begin position="577"/>
        <end position="590"/>
    </location>
</feature>
<feature type="compositionally biased region" description="Basic and acidic residues" evidence="2">
    <location>
        <begin position="599"/>
        <end position="608"/>
    </location>
</feature>
<feature type="modified residue" description="Phosphothreonine; by autocatalysis" evidence="1">
    <location>
        <position position="174"/>
    </location>
</feature>
<sequence length="608" mass="65681">MGKVIGIDLGTTNSCVAVMEGGEPVVIPNSEGSRTTPSVVAFTKNNERLVGQVAKRQAITNPERTIISIKRDMGTDKRVKIDDKSYTPQEISAMILQKIKADAEAYLGEKVTQAVITVPAYFSDSQRQATKDAGRIAGLEVLRIINEPTAAALAYGLDKESDQKILVFDLGGGTFDVSILEIGDGVFEVLATSGNNRLGGDDFDQRIIDYLIDLFKKEHGIDLSTDKMAMQRLKEAAEKAKIELSGVTTTNINLPFITADANGPKHLDVTLTRAKFEELTADLVEKTMEPTRRALEDSGLTPDKIDKILLVGGSTRIPAVQEAVRKFFGKEPFKGINPDECVAIGAAIQAGVLTGEVKDLLLLDVTPLSLGIETLGGVFTKLIERNTTIPTKKSQIFSTAADGQTAVTVRVFQGERAMAADNKLLGEFTLDGIPPAPKGVPQIEVTFDIDANGIVHVSAKDLGTGKEQHITITASTNLSEAEIEKAINEAKKYEEEDRKRKESAETRNNADSMVFQAEKTLKDLGDKLSSEDKAKIEAEIEKVREALKGTDTQAIKKATEDLQQAFYSVSAKIYQQGQAAGANPGAQTTGGEQGNVYDAEYKVVDDDK</sequence>
<evidence type="ECO:0000255" key="1">
    <source>
        <dbReference type="HAMAP-Rule" id="MF_00332"/>
    </source>
</evidence>
<evidence type="ECO:0000256" key="2">
    <source>
        <dbReference type="SAM" id="MobiDB-lite"/>
    </source>
</evidence>